<sequence length="113" mass="13241">MKKNERIRKNIEFRRVYRRGKSYSNSLLVLYVFKNNNNVDTSRVGISVSKKVGNSVVRSRVKRLISESYRLNCSNIKEKYDLVFVARNKSKDKTYKEIEGSVTNLLKRAGLYN</sequence>
<name>RNPA_CLONN</name>
<proteinExistence type="inferred from homology"/>
<evidence type="ECO:0000255" key="1">
    <source>
        <dbReference type="HAMAP-Rule" id="MF_00227"/>
    </source>
</evidence>
<gene>
    <name evidence="1" type="primary">rnpA</name>
    <name type="ordered locus">NT01CX_0869</name>
</gene>
<protein>
    <recommendedName>
        <fullName evidence="1">Ribonuclease P protein component</fullName>
        <shortName evidence="1">RNase P protein</shortName>
        <shortName evidence="1">RNaseP protein</shortName>
        <ecNumber evidence="1">3.1.26.5</ecNumber>
    </recommendedName>
    <alternativeName>
        <fullName evidence="1">Protein C5</fullName>
    </alternativeName>
</protein>
<accession>A0PX73</accession>
<keyword id="KW-0255">Endonuclease</keyword>
<keyword id="KW-0378">Hydrolase</keyword>
<keyword id="KW-0540">Nuclease</keyword>
<keyword id="KW-1185">Reference proteome</keyword>
<keyword id="KW-0694">RNA-binding</keyword>
<keyword id="KW-0819">tRNA processing</keyword>
<feature type="chain" id="PRO_1000021398" description="Ribonuclease P protein component">
    <location>
        <begin position="1"/>
        <end position="113"/>
    </location>
</feature>
<reference key="1">
    <citation type="journal article" date="2006" name="Nat. Biotechnol.">
        <title>The genome and transcriptomes of the anti-tumor agent Clostridium novyi-NT.</title>
        <authorList>
            <person name="Bettegowda C."/>
            <person name="Huang X."/>
            <person name="Lin J."/>
            <person name="Cheong I."/>
            <person name="Kohli M."/>
            <person name="Szabo S.A."/>
            <person name="Zhang X."/>
            <person name="Diaz L.A. Jr."/>
            <person name="Velculescu V.E."/>
            <person name="Parmigiani G."/>
            <person name="Kinzler K.W."/>
            <person name="Vogelstein B."/>
            <person name="Zhou S."/>
        </authorList>
    </citation>
    <scope>NUCLEOTIDE SEQUENCE [LARGE SCALE GENOMIC DNA]</scope>
    <source>
        <strain>NT</strain>
    </source>
</reference>
<organism>
    <name type="scientific">Clostridium novyi (strain NT)</name>
    <dbReference type="NCBI Taxonomy" id="386415"/>
    <lineage>
        <taxon>Bacteria</taxon>
        <taxon>Bacillati</taxon>
        <taxon>Bacillota</taxon>
        <taxon>Clostridia</taxon>
        <taxon>Eubacteriales</taxon>
        <taxon>Clostridiaceae</taxon>
        <taxon>Clostridium</taxon>
    </lineage>
</organism>
<comment type="function">
    <text evidence="1">RNaseP catalyzes the removal of the 5'-leader sequence from pre-tRNA to produce the mature 5'-terminus. It can also cleave other RNA substrates such as 4.5S RNA. The protein component plays an auxiliary but essential role in vivo by binding to the 5'-leader sequence and broadening the substrate specificity of the ribozyme.</text>
</comment>
<comment type="catalytic activity">
    <reaction evidence="1">
        <text>Endonucleolytic cleavage of RNA, removing 5'-extranucleotides from tRNA precursor.</text>
        <dbReference type="EC" id="3.1.26.5"/>
    </reaction>
</comment>
<comment type="subunit">
    <text evidence="1">Consists of a catalytic RNA component (M1 or rnpB) and a protein subunit.</text>
</comment>
<comment type="similarity">
    <text evidence="1">Belongs to the RnpA family.</text>
</comment>
<dbReference type="EC" id="3.1.26.5" evidence="1"/>
<dbReference type="EMBL" id="CP000382">
    <property type="protein sequence ID" value="ABK61344.1"/>
    <property type="molecule type" value="Genomic_DNA"/>
</dbReference>
<dbReference type="RefSeq" id="WP_011720997.1">
    <property type="nucleotide sequence ID" value="NC_008593.1"/>
</dbReference>
<dbReference type="SMR" id="A0PX73"/>
<dbReference type="STRING" id="386415.NT01CX_0869"/>
<dbReference type="KEGG" id="cno:NT01CX_0869"/>
<dbReference type="eggNOG" id="COG0594">
    <property type="taxonomic scope" value="Bacteria"/>
</dbReference>
<dbReference type="HOGENOM" id="CLU_117179_9_3_9"/>
<dbReference type="Proteomes" id="UP000008220">
    <property type="component" value="Chromosome"/>
</dbReference>
<dbReference type="GO" id="GO:0030677">
    <property type="term" value="C:ribonuclease P complex"/>
    <property type="evidence" value="ECO:0007669"/>
    <property type="project" value="TreeGrafter"/>
</dbReference>
<dbReference type="GO" id="GO:0042781">
    <property type="term" value="F:3'-tRNA processing endoribonuclease activity"/>
    <property type="evidence" value="ECO:0007669"/>
    <property type="project" value="TreeGrafter"/>
</dbReference>
<dbReference type="GO" id="GO:0004526">
    <property type="term" value="F:ribonuclease P activity"/>
    <property type="evidence" value="ECO:0007669"/>
    <property type="project" value="UniProtKB-UniRule"/>
</dbReference>
<dbReference type="GO" id="GO:0000049">
    <property type="term" value="F:tRNA binding"/>
    <property type="evidence" value="ECO:0007669"/>
    <property type="project" value="UniProtKB-UniRule"/>
</dbReference>
<dbReference type="GO" id="GO:0001682">
    <property type="term" value="P:tRNA 5'-leader removal"/>
    <property type="evidence" value="ECO:0007669"/>
    <property type="project" value="UniProtKB-UniRule"/>
</dbReference>
<dbReference type="Gene3D" id="3.30.230.10">
    <property type="match status" value="1"/>
</dbReference>
<dbReference type="HAMAP" id="MF_00227">
    <property type="entry name" value="RNase_P"/>
    <property type="match status" value="1"/>
</dbReference>
<dbReference type="InterPro" id="IPR020568">
    <property type="entry name" value="Ribosomal_Su5_D2-typ_SF"/>
</dbReference>
<dbReference type="InterPro" id="IPR014721">
    <property type="entry name" value="Ribsml_uS5_D2-typ_fold_subgr"/>
</dbReference>
<dbReference type="InterPro" id="IPR000100">
    <property type="entry name" value="RNase_P"/>
</dbReference>
<dbReference type="NCBIfam" id="TIGR00188">
    <property type="entry name" value="rnpA"/>
    <property type="match status" value="1"/>
</dbReference>
<dbReference type="PANTHER" id="PTHR33992">
    <property type="entry name" value="RIBONUCLEASE P PROTEIN COMPONENT"/>
    <property type="match status" value="1"/>
</dbReference>
<dbReference type="PANTHER" id="PTHR33992:SF1">
    <property type="entry name" value="RIBONUCLEASE P PROTEIN COMPONENT"/>
    <property type="match status" value="1"/>
</dbReference>
<dbReference type="Pfam" id="PF00825">
    <property type="entry name" value="Ribonuclease_P"/>
    <property type="match status" value="1"/>
</dbReference>
<dbReference type="SUPFAM" id="SSF54211">
    <property type="entry name" value="Ribosomal protein S5 domain 2-like"/>
    <property type="match status" value="1"/>
</dbReference>